<gene>
    <name type="primary">cact</name>
</gene>
<evidence type="ECO:0000255" key="1"/>
<evidence type="ECO:0000256" key="2">
    <source>
        <dbReference type="SAM" id="MobiDB-lite"/>
    </source>
</evidence>
<evidence type="ECO:0000305" key="3"/>
<evidence type="ECO:0000312" key="4">
    <source>
        <dbReference type="EMBL" id="AAQ65041.1"/>
    </source>
</evidence>
<organism evidence="4">
    <name type="scientific">Drosophila yakuba</name>
    <name type="common">Fruit fly</name>
    <dbReference type="NCBI Taxonomy" id="7245"/>
    <lineage>
        <taxon>Eukaryota</taxon>
        <taxon>Metazoa</taxon>
        <taxon>Ecdysozoa</taxon>
        <taxon>Arthropoda</taxon>
        <taxon>Hexapoda</taxon>
        <taxon>Insecta</taxon>
        <taxon>Pterygota</taxon>
        <taxon>Neoptera</taxon>
        <taxon>Endopterygota</taxon>
        <taxon>Diptera</taxon>
        <taxon>Brachycera</taxon>
        <taxon>Muscomorpha</taxon>
        <taxon>Ephydroidea</taxon>
        <taxon>Drosophilidae</taxon>
        <taxon>Drosophila</taxon>
        <taxon>Sophophora</taxon>
    </lineage>
</organism>
<sequence length="489" mass="52539">MPSPTKAAEAATKATATSDCSCSAASVEERGPVNAANPSSTXATSGKIGGKTQDQTAAINKPKEFAVPNETSDSGFISGPQSSQICSEEIVPDSEEQDKNQQQSAPQKEQPVVLDSGIIDEEEEHQDTTTATADSMRLKHSADTGIPQWTVESHLVNRGEQLNNLGQSSSTQITGRSKFQSSTASTANANPSGXGATSSAPPSSINIXNAWEQFYQQNDDGDTPXHLACISGSVEVVAALIRMAPHPCLLNIQNDVAQTPLHLAALTAQPNIMRILLLAGAEVRDRHGNTALHLSCIAGEKQCVRALTEEFGATEIHEAHRQYGHRSNDKAVSSLSFARLPADLEIRNYDGERCVHLAAEAGHIDILRILVSHGADINAREGKSGRTPLHIAIEGCNEDLANFLLDECEKLNLETATYAGLTAYQFACIMNKSRMQNILEKRGAETVTPPDSDYDSSDIEDLDDTKMYDRFGDPRYFVSYNGGNPMTVA</sequence>
<reference evidence="4" key="1">
    <citation type="journal article" date="2003" name="Genetics">
        <title>Natural selection drives Drosophila immune system evolution.</title>
        <authorList>
            <person name="Schlenke T.A."/>
            <person name="Begun D.J."/>
        </authorList>
    </citation>
    <scope>NUCLEOTIDE SEQUENCE [GENOMIC DNA]</scope>
</reference>
<dbReference type="EMBL" id="AY352231">
    <property type="protein sequence ID" value="AAQ65041.1"/>
    <property type="molecule type" value="Genomic_DNA"/>
</dbReference>
<dbReference type="EMBL" id="AY352228">
    <property type="protein sequence ID" value="AAQ65041.1"/>
    <property type="status" value="JOINED"/>
    <property type="molecule type" value="Genomic_DNA"/>
</dbReference>
<dbReference type="EMBL" id="AY352229">
    <property type="protein sequence ID" value="AAQ65041.1"/>
    <property type="status" value="JOINED"/>
    <property type="molecule type" value="Genomic_DNA"/>
</dbReference>
<dbReference type="EMBL" id="AY352230">
    <property type="protein sequence ID" value="AAQ65041.1"/>
    <property type="status" value="JOINED"/>
    <property type="molecule type" value="Genomic_DNA"/>
</dbReference>
<dbReference type="eggNOG" id="KOG0504">
    <property type="taxonomic scope" value="Eukaryota"/>
</dbReference>
<dbReference type="OrthoDB" id="20727at2759"/>
<dbReference type="GO" id="GO:0005737">
    <property type="term" value="C:cytoplasm"/>
    <property type="evidence" value="ECO:0000250"/>
    <property type="project" value="UniProtKB"/>
</dbReference>
<dbReference type="GO" id="GO:0005829">
    <property type="term" value="C:cytosol"/>
    <property type="evidence" value="ECO:0007669"/>
    <property type="project" value="EnsemblMetazoa"/>
</dbReference>
<dbReference type="GO" id="GO:0031594">
    <property type="term" value="C:neuromuscular junction"/>
    <property type="evidence" value="ECO:0007669"/>
    <property type="project" value="EnsemblMetazoa"/>
</dbReference>
<dbReference type="GO" id="GO:0071212">
    <property type="term" value="C:subsynaptic reticulum"/>
    <property type="evidence" value="ECO:0007669"/>
    <property type="project" value="EnsemblMetazoa"/>
</dbReference>
<dbReference type="GO" id="GO:0051059">
    <property type="term" value="F:NF-kappaB binding"/>
    <property type="evidence" value="ECO:0007669"/>
    <property type="project" value="EnsemblMetazoa"/>
</dbReference>
<dbReference type="GO" id="GO:0140311">
    <property type="term" value="F:protein sequestering activity"/>
    <property type="evidence" value="ECO:0007669"/>
    <property type="project" value="EnsemblMetazoa"/>
</dbReference>
<dbReference type="GO" id="GO:0019730">
    <property type="term" value="P:antimicrobial humoral response"/>
    <property type="evidence" value="ECO:0007669"/>
    <property type="project" value="EnsemblMetazoa"/>
</dbReference>
<dbReference type="GO" id="GO:0071356">
    <property type="term" value="P:cellular response to tumor necrosis factor"/>
    <property type="evidence" value="ECO:0007669"/>
    <property type="project" value="TreeGrafter"/>
</dbReference>
<dbReference type="GO" id="GO:0046843">
    <property type="term" value="P:dorsal appendage formation"/>
    <property type="evidence" value="ECO:0000250"/>
    <property type="project" value="UniProtKB"/>
</dbReference>
<dbReference type="GO" id="GO:0009950">
    <property type="term" value="P:dorsal/ventral axis specification"/>
    <property type="evidence" value="ECO:0007669"/>
    <property type="project" value="EnsemblMetazoa"/>
</dbReference>
<dbReference type="GO" id="GO:0002789">
    <property type="term" value="P:negative regulation of antifungal peptide production"/>
    <property type="evidence" value="ECO:0007669"/>
    <property type="project" value="EnsemblMetazoa"/>
</dbReference>
<dbReference type="GO" id="GO:0043124">
    <property type="term" value="P:negative regulation of canonical NF-kappaB signal transduction"/>
    <property type="evidence" value="ECO:0007669"/>
    <property type="project" value="EnsemblMetazoa"/>
</dbReference>
<dbReference type="GO" id="GO:0045611">
    <property type="term" value="P:negative regulation of hemocyte differentiation"/>
    <property type="evidence" value="ECO:0007669"/>
    <property type="project" value="EnsemblMetazoa"/>
</dbReference>
<dbReference type="GO" id="GO:0045751">
    <property type="term" value="P:negative regulation of Toll signaling pathway"/>
    <property type="evidence" value="ECO:0007669"/>
    <property type="project" value="EnsemblMetazoa"/>
</dbReference>
<dbReference type="Gene3D" id="1.25.40.20">
    <property type="entry name" value="Ankyrin repeat-containing domain"/>
    <property type="match status" value="1"/>
</dbReference>
<dbReference type="InterPro" id="IPR002110">
    <property type="entry name" value="Ankyrin_rpt"/>
</dbReference>
<dbReference type="InterPro" id="IPR036770">
    <property type="entry name" value="Ankyrin_rpt-contain_sf"/>
</dbReference>
<dbReference type="InterPro" id="IPR051070">
    <property type="entry name" value="NF-kappa-B_inhibitor"/>
</dbReference>
<dbReference type="PANTHER" id="PTHR46680">
    <property type="entry name" value="NF-KAPPA-B INHIBITOR ALPHA"/>
    <property type="match status" value="1"/>
</dbReference>
<dbReference type="PANTHER" id="PTHR46680:SF3">
    <property type="entry name" value="NF-KAPPA-B INHIBITOR CACTUS"/>
    <property type="match status" value="1"/>
</dbReference>
<dbReference type="Pfam" id="PF00023">
    <property type="entry name" value="Ank"/>
    <property type="match status" value="1"/>
</dbReference>
<dbReference type="Pfam" id="PF12796">
    <property type="entry name" value="Ank_2"/>
    <property type="match status" value="2"/>
</dbReference>
<dbReference type="PRINTS" id="PR01415">
    <property type="entry name" value="ANKYRIN"/>
</dbReference>
<dbReference type="SMART" id="SM00248">
    <property type="entry name" value="ANK"/>
    <property type="match status" value="5"/>
</dbReference>
<dbReference type="SUPFAM" id="SSF48403">
    <property type="entry name" value="Ankyrin repeat"/>
    <property type="match status" value="1"/>
</dbReference>
<dbReference type="PROSITE" id="PS50297">
    <property type="entry name" value="ANK_REP_REGION"/>
    <property type="match status" value="1"/>
</dbReference>
<dbReference type="PROSITE" id="PS50088">
    <property type="entry name" value="ANK_REPEAT"/>
    <property type="match status" value="4"/>
</dbReference>
<proteinExistence type="inferred from homology"/>
<comment type="function">
    <text evidence="3">Involved in the formation of the dorsoventral pattern. It inhibits nuclear translocation of the dorsal morphogen in the dorsal region of the embryo.</text>
</comment>
<comment type="subcellular location">
    <subcellularLocation>
        <location>Cytoplasm</location>
    </subcellularLocation>
</comment>
<accession>P83757</accession>
<keyword id="KW-0040">ANK repeat</keyword>
<keyword id="KW-0963">Cytoplasm</keyword>
<keyword id="KW-0217">Developmental protein</keyword>
<keyword id="KW-0597">Phosphoprotein</keyword>
<keyword id="KW-0677">Repeat</keyword>
<feature type="chain" id="PRO_0000067056" description="NF-kappa-B inhibitor cactus">
    <location>
        <begin position="1"/>
        <end position="489"/>
    </location>
</feature>
<feature type="repeat" description="ANK 1" evidence="3">
    <location>
        <begin position="220"/>
        <end position="252"/>
    </location>
</feature>
<feature type="repeat" description="ANK 2" evidence="3">
    <location>
        <begin position="256"/>
        <end position="285"/>
    </location>
</feature>
<feature type="repeat" description="ANK 3" evidence="3">
    <location>
        <begin position="287"/>
        <end position="316"/>
    </location>
</feature>
<feature type="repeat" description="ANK 4" evidence="3">
    <location>
        <begin position="350"/>
        <end position="379"/>
    </location>
</feature>
<feature type="repeat" description="ANK 5" evidence="3">
    <location>
        <begin position="384"/>
        <end position="413"/>
    </location>
</feature>
<feature type="region of interest" description="Disordered" evidence="2">
    <location>
        <begin position="1"/>
        <end position="138"/>
    </location>
</feature>
<feature type="region of interest" description="Disordered" evidence="2">
    <location>
        <begin position="163"/>
        <end position="203"/>
    </location>
</feature>
<feature type="compositionally biased region" description="Low complexity" evidence="2">
    <location>
        <begin position="1"/>
        <end position="26"/>
    </location>
</feature>
<feature type="compositionally biased region" description="Polar residues" evidence="2">
    <location>
        <begin position="69"/>
        <end position="86"/>
    </location>
</feature>
<feature type="compositionally biased region" description="Polar residues" evidence="2">
    <location>
        <begin position="163"/>
        <end position="180"/>
    </location>
</feature>
<feature type="compositionally biased region" description="Low complexity" evidence="2">
    <location>
        <begin position="181"/>
        <end position="203"/>
    </location>
</feature>
<feature type="modified residue" description="Phosphoserine; by PKC" evidence="1">
    <location>
        <position position="45"/>
    </location>
</feature>
<feature type="modified residue" description="Phosphoserine; by PKC" evidence="1">
    <location>
        <position position="135"/>
    </location>
</feature>
<feature type="modified residue" description="Phosphothreonine; by PKC" evidence="1">
    <location>
        <position position="174"/>
    </location>
</feature>
<feature type="modified residue" description="Phosphothreonine; by PKC" evidence="1">
    <location>
        <position position="308"/>
    </location>
</feature>
<feature type="modified residue" description="Phosphoserine; by PKC" evidence="1">
    <location>
        <position position="384"/>
    </location>
</feature>
<protein>
    <recommendedName>
        <fullName>NF-kappa-B inhibitor cactus</fullName>
    </recommendedName>
</protein>
<name>CACT_DROYA</name>